<reference key="1">
    <citation type="journal article" date="2001" name="Lancet">
        <title>Whole genome sequencing of meticillin-resistant Staphylococcus aureus.</title>
        <authorList>
            <person name="Kuroda M."/>
            <person name="Ohta T."/>
            <person name="Uchiyama I."/>
            <person name="Baba T."/>
            <person name="Yuzawa H."/>
            <person name="Kobayashi I."/>
            <person name="Cui L."/>
            <person name="Oguchi A."/>
            <person name="Aoki K."/>
            <person name="Nagai Y."/>
            <person name="Lian J.-Q."/>
            <person name="Ito T."/>
            <person name="Kanamori M."/>
            <person name="Matsumaru H."/>
            <person name="Maruyama A."/>
            <person name="Murakami H."/>
            <person name="Hosoyama A."/>
            <person name="Mizutani-Ui Y."/>
            <person name="Takahashi N.K."/>
            <person name="Sawano T."/>
            <person name="Inoue R."/>
            <person name="Kaito C."/>
            <person name="Sekimizu K."/>
            <person name="Hirakawa H."/>
            <person name="Kuhara S."/>
            <person name="Goto S."/>
            <person name="Yabuzaki J."/>
            <person name="Kanehisa M."/>
            <person name="Yamashita A."/>
            <person name="Oshima K."/>
            <person name="Furuya K."/>
            <person name="Yoshino C."/>
            <person name="Shiba T."/>
            <person name="Hattori M."/>
            <person name="Ogasawara N."/>
            <person name="Hayashi H."/>
            <person name="Hiramatsu K."/>
        </authorList>
    </citation>
    <scope>NUCLEOTIDE SEQUENCE [LARGE SCALE GENOMIC DNA]</scope>
    <source>
        <strain>N315</strain>
    </source>
</reference>
<sequence length="117" mass="12797">MISIILVMIGGGFGAIARSAITDYFNHKFTSKLPIATLIVNLVGSFLIGLTIGLSISISWFPAFFVTGFLGGLTTFSTLAKELTLMMTPKFDINLFLNYSLLQFIIGFIACYIGYHI</sequence>
<name>FLUC2_STAAN</name>
<keyword id="KW-1003">Cell membrane</keyword>
<keyword id="KW-0407">Ion channel</keyword>
<keyword id="KW-0406">Ion transport</keyword>
<keyword id="KW-0472">Membrane</keyword>
<keyword id="KW-0479">Metal-binding</keyword>
<keyword id="KW-0915">Sodium</keyword>
<keyword id="KW-0812">Transmembrane</keyword>
<keyword id="KW-1133">Transmembrane helix</keyword>
<keyword id="KW-0813">Transport</keyword>
<organism>
    <name type="scientific">Staphylococcus aureus (strain N315)</name>
    <dbReference type="NCBI Taxonomy" id="158879"/>
    <lineage>
        <taxon>Bacteria</taxon>
        <taxon>Bacillati</taxon>
        <taxon>Bacillota</taxon>
        <taxon>Bacilli</taxon>
        <taxon>Bacillales</taxon>
        <taxon>Staphylococcaceae</taxon>
        <taxon>Staphylococcus</taxon>
    </lineage>
</organism>
<gene>
    <name evidence="1" type="primary">fluC2</name>
    <name evidence="1" type="synonym">crcB2</name>
    <name type="ordered locus">SA1602</name>
</gene>
<protein>
    <recommendedName>
        <fullName evidence="1">Fluoride-specific ion channel FluC 2</fullName>
    </recommendedName>
</protein>
<feature type="chain" id="PRO_0000110178" description="Fluoride-specific ion channel FluC 2">
    <location>
        <begin position="1"/>
        <end position="117"/>
    </location>
</feature>
<feature type="transmembrane region" description="Helical" evidence="1">
    <location>
        <begin position="1"/>
        <end position="21"/>
    </location>
</feature>
<feature type="transmembrane region" description="Helical" evidence="1">
    <location>
        <begin position="46"/>
        <end position="66"/>
    </location>
</feature>
<feature type="transmembrane region" description="Helical" evidence="1">
    <location>
        <begin position="95"/>
        <end position="115"/>
    </location>
</feature>
<feature type="binding site" evidence="1">
    <location>
        <position position="71"/>
    </location>
    <ligand>
        <name>Na(+)</name>
        <dbReference type="ChEBI" id="CHEBI:29101"/>
        <note>structural</note>
    </ligand>
</feature>
<feature type="binding site" evidence="1">
    <location>
        <position position="74"/>
    </location>
    <ligand>
        <name>Na(+)</name>
        <dbReference type="ChEBI" id="CHEBI:29101"/>
        <note>structural</note>
    </ligand>
</feature>
<accession>P61385</accession>
<accession>Q99T85</accession>
<comment type="function">
    <text evidence="1">Fluoride-specific ion channel. Important for reducing fluoride concentration in the cell, thus reducing its toxicity.</text>
</comment>
<comment type="catalytic activity">
    <reaction evidence="1">
        <text>fluoride(in) = fluoride(out)</text>
        <dbReference type="Rhea" id="RHEA:76159"/>
        <dbReference type="ChEBI" id="CHEBI:17051"/>
    </reaction>
    <physiologicalReaction direction="left-to-right" evidence="1">
        <dbReference type="Rhea" id="RHEA:76160"/>
    </physiologicalReaction>
</comment>
<comment type="activity regulation">
    <text evidence="1">Na(+) is not transported, but it plays an essential structural role and its presence is essential for fluoride channel function.</text>
</comment>
<comment type="subcellular location">
    <subcellularLocation>
        <location evidence="1">Cell membrane</location>
        <topology evidence="1">Multi-pass membrane protein</topology>
    </subcellularLocation>
</comment>
<comment type="similarity">
    <text evidence="1">Belongs to the fluoride channel Fluc/FEX (TC 1.A.43) family.</text>
</comment>
<proteinExistence type="inferred from homology"/>
<evidence type="ECO:0000255" key="1">
    <source>
        <dbReference type="HAMAP-Rule" id="MF_00454"/>
    </source>
</evidence>
<dbReference type="EMBL" id="BA000018">
    <property type="protein sequence ID" value="BAB42870.1"/>
    <property type="molecule type" value="Genomic_DNA"/>
</dbReference>
<dbReference type="PIR" id="A89964">
    <property type="entry name" value="A89964"/>
</dbReference>
<dbReference type="RefSeq" id="WP_000623470.1">
    <property type="nucleotide sequence ID" value="NC_002745.2"/>
</dbReference>
<dbReference type="SMR" id="P61385"/>
<dbReference type="EnsemblBacteria" id="BAB42870">
    <property type="protein sequence ID" value="BAB42870"/>
    <property type="gene ID" value="BAB42870"/>
</dbReference>
<dbReference type="KEGG" id="sau:SA1602"/>
<dbReference type="HOGENOM" id="CLU_114342_2_3_9"/>
<dbReference type="GO" id="GO:0005886">
    <property type="term" value="C:plasma membrane"/>
    <property type="evidence" value="ECO:0007669"/>
    <property type="project" value="UniProtKB-SubCell"/>
</dbReference>
<dbReference type="GO" id="GO:0062054">
    <property type="term" value="F:fluoride channel activity"/>
    <property type="evidence" value="ECO:0007669"/>
    <property type="project" value="UniProtKB-UniRule"/>
</dbReference>
<dbReference type="GO" id="GO:0046872">
    <property type="term" value="F:metal ion binding"/>
    <property type="evidence" value="ECO:0007669"/>
    <property type="project" value="UniProtKB-KW"/>
</dbReference>
<dbReference type="GO" id="GO:0140114">
    <property type="term" value="P:cellular detoxification of fluoride"/>
    <property type="evidence" value="ECO:0007669"/>
    <property type="project" value="UniProtKB-UniRule"/>
</dbReference>
<dbReference type="HAMAP" id="MF_00454">
    <property type="entry name" value="FluC"/>
    <property type="match status" value="1"/>
</dbReference>
<dbReference type="InterPro" id="IPR003691">
    <property type="entry name" value="FluC"/>
</dbReference>
<dbReference type="PANTHER" id="PTHR28259">
    <property type="entry name" value="FLUORIDE EXPORT PROTEIN 1-RELATED"/>
    <property type="match status" value="1"/>
</dbReference>
<dbReference type="PANTHER" id="PTHR28259:SF16">
    <property type="entry name" value="FLUORIDE-SPECIFIC ION CHANNEL FLUC 2"/>
    <property type="match status" value="1"/>
</dbReference>
<dbReference type="Pfam" id="PF02537">
    <property type="entry name" value="CRCB"/>
    <property type="match status" value="1"/>
</dbReference>